<feature type="chain" id="PRO_0000192738" description="Bifunctional uridylyltransferase/uridylyl-removing enzyme">
    <location>
        <begin position="1"/>
        <end position="879"/>
    </location>
</feature>
<feature type="domain" description="HD" evidence="2">
    <location>
        <begin position="458"/>
        <end position="580"/>
    </location>
</feature>
<feature type="domain" description="ACT 1" evidence="1">
    <location>
        <begin position="701"/>
        <end position="782"/>
    </location>
</feature>
<feature type="domain" description="ACT 2" evidence="1">
    <location>
        <begin position="809"/>
        <end position="879"/>
    </location>
</feature>
<feature type="region of interest" description="Uridylyltransferase">
    <location>
        <begin position="1"/>
        <end position="340"/>
    </location>
</feature>
<feature type="region of interest" description="Uridylyl-removing">
    <location>
        <begin position="341"/>
        <end position="700"/>
    </location>
</feature>
<name>GLND_IDILO</name>
<reference key="1">
    <citation type="journal article" date="2004" name="Proc. Natl. Acad. Sci. U.S.A.">
        <title>Genome sequence of the deep-sea gamma-proteobacterium Idiomarina loihiensis reveals amino acid fermentation as a source of carbon and energy.</title>
        <authorList>
            <person name="Hou S."/>
            <person name="Saw J.H."/>
            <person name="Lee K.S."/>
            <person name="Freitas T.A."/>
            <person name="Belisle C."/>
            <person name="Kawarabayasi Y."/>
            <person name="Donachie S.P."/>
            <person name="Pikina A."/>
            <person name="Galperin M.Y."/>
            <person name="Koonin E.V."/>
            <person name="Makarova K.S."/>
            <person name="Omelchenko M.V."/>
            <person name="Sorokin A."/>
            <person name="Wolf Y.I."/>
            <person name="Li Q.X."/>
            <person name="Keum Y.S."/>
            <person name="Campbell S."/>
            <person name="Denery J."/>
            <person name="Aizawa S."/>
            <person name="Shibata S."/>
            <person name="Malahoff A."/>
            <person name="Alam M."/>
        </authorList>
    </citation>
    <scope>NUCLEOTIDE SEQUENCE [LARGE SCALE GENOMIC DNA]</scope>
    <source>
        <strain>ATCC BAA-735 / DSM 15497 / L2-TR</strain>
    </source>
</reference>
<protein>
    <recommendedName>
        <fullName evidence="1">Bifunctional uridylyltransferase/uridylyl-removing enzyme</fullName>
        <shortName evidence="1">UTase/UR</shortName>
    </recommendedName>
    <alternativeName>
        <fullName evidence="1">Bifunctional [protein-PII] modification enzyme</fullName>
    </alternativeName>
    <alternativeName>
        <fullName evidence="1">Bifunctional nitrogen sensor protein</fullName>
    </alternativeName>
    <domain>
        <recommendedName>
            <fullName evidence="1">[Protein-PII] uridylyltransferase</fullName>
            <shortName evidence="1">PII uridylyltransferase</shortName>
            <shortName evidence="1">UTase</shortName>
            <ecNumber evidence="1">2.7.7.59</ecNumber>
        </recommendedName>
    </domain>
    <domain>
        <recommendedName>
            <fullName evidence="1">[Protein-PII]-UMP uridylyl-removing enzyme</fullName>
            <shortName evidence="1">UR</shortName>
            <ecNumber evidence="1">3.1.4.-</ecNumber>
        </recommendedName>
    </domain>
</protein>
<keyword id="KW-0378">Hydrolase</keyword>
<keyword id="KW-0460">Magnesium</keyword>
<keyword id="KW-0511">Multifunctional enzyme</keyword>
<keyword id="KW-0548">Nucleotidyltransferase</keyword>
<keyword id="KW-1185">Reference proteome</keyword>
<keyword id="KW-0677">Repeat</keyword>
<keyword id="KW-0808">Transferase</keyword>
<comment type="function">
    <text evidence="1">Modifies, by uridylylation and deuridylylation, the PII regulatory proteins (GlnB and homologs), in response to the nitrogen status of the cell that GlnD senses through the glutamine level. Under low glutamine levels, catalyzes the conversion of the PII proteins and UTP to PII-UMP and PPi, while under higher glutamine levels, GlnD hydrolyzes PII-UMP to PII and UMP (deuridylylation). Thus, controls uridylylation state and activity of the PII proteins, and plays an important role in the regulation of nitrogen assimilation and metabolism.</text>
</comment>
<comment type="catalytic activity">
    <reaction evidence="1">
        <text>[protein-PII]-L-tyrosine + UTP = [protein-PII]-uridylyl-L-tyrosine + diphosphate</text>
        <dbReference type="Rhea" id="RHEA:13673"/>
        <dbReference type="Rhea" id="RHEA-COMP:12147"/>
        <dbReference type="Rhea" id="RHEA-COMP:12148"/>
        <dbReference type="ChEBI" id="CHEBI:33019"/>
        <dbReference type="ChEBI" id="CHEBI:46398"/>
        <dbReference type="ChEBI" id="CHEBI:46858"/>
        <dbReference type="ChEBI" id="CHEBI:90602"/>
        <dbReference type="EC" id="2.7.7.59"/>
    </reaction>
</comment>
<comment type="catalytic activity">
    <reaction evidence="1">
        <text>[protein-PII]-uridylyl-L-tyrosine + H2O = [protein-PII]-L-tyrosine + UMP + H(+)</text>
        <dbReference type="Rhea" id="RHEA:48600"/>
        <dbReference type="Rhea" id="RHEA-COMP:12147"/>
        <dbReference type="Rhea" id="RHEA-COMP:12148"/>
        <dbReference type="ChEBI" id="CHEBI:15377"/>
        <dbReference type="ChEBI" id="CHEBI:15378"/>
        <dbReference type="ChEBI" id="CHEBI:46858"/>
        <dbReference type="ChEBI" id="CHEBI:57865"/>
        <dbReference type="ChEBI" id="CHEBI:90602"/>
    </reaction>
</comment>
<comment type="cofactor">
    <cofactor evidence="1">
        <name>Mg(2+)</name>
        <dbReference type="ChEBI" id="CHEBI:18420"/>
    </cofactor>
</comment>
<comment type="activity regulation">
    <text evidence="1">Uridylyltransferase (UTase) activity is inhibited by glutamine, while glutamine activates uridylyl-removing (UR) activity.</text>
</comment>
<comment type="domain">
    <text evidence="1">Has four distinct domains: an N-terminal nucleotidyltransferase (NT) domain responsible for UTase activity, a central HD domain that encodes UR activity, and two C-terminal ACT domains that seem to have a role in glutamine sensing.</text>
</comment>
<comment type="similarity">
    <text evidence="1">Belongs to the GlnD family.</text>
</comment>
<accession>Q5QXT0</accession>
<gene>
    <name evidence="1" type="primary">glnD</name>
    <name type="ordered locus">IL0847</name>
</gene>
<sequence>MANVQEDKDFHGRWPDRTLQPCLKDYKALLESYQNWSAARFVTADIDELVHHRATFFDQLISQLWQQFQLEDEPASILAVGGYGRETLHPGSDIDLLILVGPENAEAEAKLSEKLGQFVTFLWDLHLDIGHSVRTIEDCFAQSENDITIATNLIESRYLSGAESLYNEFHQQLLNDFPWSSRDFYQAKLDEQKQRHQQYHSTSYNLEPNIKSSPGGLRDIQTVGWIAKRHFRTHSDENLVEYGYMTADEFVELRDCMNWLWRIRFALHLEAGKREDRLLFDFQPGVAVRLGYGNDGKASVETMMKDYFKVVLRVSELNQMLLQFFHQAILGTQDLQHAEHISDDFAVANKLLTARHDNVFDNHCNIIRAFVCIAEHPQIQGIHSNTIRLLRNARAQLSEPLSHDPECRDLFNQLIQHPRGCGLSFALMHHHSVLASYLSQWQQIVGQMQFDLFHAYTVDEHTFRLVRNLYRFSDEDYQDQFPLCEKLVAQMDRRYCLYLAGIFHDIAKGRGGDHSELGEMDARNFCHQHGYSEEDAELVAWLVRHHLTMSVTAQKRDIHDPEVIQDFANQVSTPERLDYLYCLTVADIRATNQSLWNNWKATLLEELYNATSYLLQQDSNKPTLDIRQKINENKASAMALLLSAGFEKAEILALWGRFTADYFFRHTAEQISWHSQHILNLPSEQLPLILIGDENNYGTTELFIYHHEEGHLFASVAGVLDSQQLNILDAQILATRDGFVMDTFVVLQRDGKPLTEPHRIEEVKQQLLDVLHKRIPVPSTKRPLSRRMKNFSVATEVTFIPSKHHGRTTFELVTLDRPGLIAKLAAILQQQNVILLAAKITTIGEQAEDLFIVTTEQQTALSDKQKKTLKAKIIKDLEF</sequence>
<evidence type="ECO:0000255" key="1">
    <source>
        <dbReference type="HAMAP-Rule" id="MF_00277"/>
    </source>
</evidence>
<evidence type="ECO:0000255" key="2">
    <source>
        <dbReference type="PROSITE-ProRule" id="PRU01175"/>
    </source>
</evidence>
<organism>
    <name type="scientific">Idiomarina loihiensis (strain ATCC BAA-735 / DSM 15497 / L2-TR)</name>
    <dbReference type="NCBI Taxonomy" id="283942"/>
    <lineage>
        <taxon>Bacteria</taxon>
        <taxon>Pseudomonadati</taxon>
        <taxon>Pseudomonadota</taxon>
        <taxon>Gammaproteobacteria</taxon>
        <taxon>Alteromonadales</taxon>
        <taxon>Idiomarinaceae</taxon>
        <taxon>Idiomarina</taxon>
    </lineage>
</organism>
<dbReference type="EC" id="2.7.7.59" evidence="1"/>
<dbReference type="EC" id="3.1.4.-" evidence="1"/>
<dbReference type="EMBL" id="AE017340">
    <property type="protein sequence ID" value="AAV81687.1"/>
    <property type="molecule type" value="Genomic_DNA"/>
</dbReference>
<dbReference type="RefSeq" id="WP_011234098.1">
    <property type="nucleotide sequence ID" value="NC_006512.1"/>
</dbReference>
<dbReference type="SMR" id="Q5QXT0"/>
<dbReference type="STRING" id="283942.IL0847"/>
<dbReference type="GeneID" id="41336003"/>
<dbReference type="KEGG" id="ilo:IL0847"/>
<dbReference type="eggNOG" id="COG2844">
    <property type="taxonomic scope" value="Bacteria"/>
</dbReference>
<dbReference type="HOGENOM" id="CLU_012833_0_0_6"/>
<dbReference type="OrthoDB" id="9758038at2"/>
<dbReference type="Proteomes" id="UP000001171">
    <property type="component" value="Chromosome"/>
</dbReference>
<dbReference type="GO" id="GO:0008773">
    <property type="term" value="F:[protein-PII] uridylyltransferase activity"/>
    <property type="evidence" value="ECO:0007669"/>
    <property type="project" value="UniProtKB-UniRule"/>
</dbReference>
<dbReference type="GO" id="GO:0008081">
    <property type="term" value="F:phosphoric diester hydrolase activity"/>
    <property type="evidence" value="ECO:0007669"/>
    <property type="project" value="UniProtKB-UniRule"/>
</dbReference>
<dbReference type="GO" id="GO:0006808">
    <property type="term" value="P:regulation of nitrogen utilization"/>
    <property type="evidence" value="ECO:0007669"/>
    <property type="project" value="UniProtKB-UniRule"/>
</dbReference>
<dbReference type="CDD" id="cd04899">
    <property type="entry name" value="ACT_ACR-UUR-like_2"/>
    <property type="match status" value="1"/>
</dbReference>
<dbReference type="CDD" id="cd04900">
    <property type="entry name" value="ACT_UUR-like_1"/>
    <property type="match status" value="1"/>
</dbReference>
<dbReference type="CDD" id="cd00077">
    <property type="entry name" value="HDc"/>
    <property type="match status" value="1"/>
</dbReference>
<dbReference type="CDD" id="cd05401">
    <property type="entry name" value="NT_GlnE_GlnD_like"/>
    <property type="match status" value="1"/>
</dbReference>
<dbReference type="Gene3D" id="1.10.3210.10">
    <property type="entry name" value="Hypothetical protein af1432"/>
    <property type="match status" value="1"/>
</dbReference>
<dbReference type="HAMAP" id="MF_00277">
    <property type="entry name" value="PII_uridylyl_transf"/>
    <property type="match status" value="1"/>
</dbReference>
<dbReference type="InterPro" id="IPR045865">
    <property type="entry name" value="ACT-like_dom_sf"/>
</dbReference>
<dbReference type="InterPro" id="IPR002912">
    <property type="entry name" value="ACT_dom"/>
</dbReference>
<dbReference type="InterPro" id="IPR003607">
    <property type="entry name" value="HD/PDEase_dom"/>
</dbReference>
<dbReference type="InterPro" id="IPR006674">
    <property type="entry name" value="HD_domain"/>
</dbReference>
<dbReference type="InterPro" id="IPR043519">
    <property type="entry name" value="NT_sf"/>
</dbReference>
<dbReference type="InterPro" id="IPR013546">
    <property type="entry name" value="PII_UdlTrfase/GS_AdlTrfase"/>
</dbReference>
<dbReference type="InterPro" id="IPR002934">
    <property type="entry name" value="Polymerase_NTP_transf_dom"/>
</dbReference>
<dbReference type="InterPro" id="IPR010043">
    <property type="entry name" value="UTase/UR"/>
</dbReference>
<dbReference type="NCBIfam" id="TIGR01693">
    <property type="entry name" value="UTase_glnD"/>
    <property type="match status" value="1"/>
</dbReference>
<dbReference type="PANTHER" id="PTHR47320">
    <property type="entry name" value="BIFUNCTIONAL URIDYLYLTRANSFERASE/URIDYLYL-REMOVING ENZYME"/>
    <property type="match status" value="1"/>
</dbReference>
<dbReference type="PANTHER" id="PTHR47320:SF1">
    <property type="entry name" value="BIFUNCTIONAL URIDYLYLTRANSFERASE_URIDYLYL-REMOVING ENZYME"/>
    <property type="match status" value="1"/>
</dbReference>
<dbReference type="Pfam" id="PF08335">
    <property type="entry name" value="GlnD_UR_UTase"/>
    <property type="match status" value="1"/>
</dbReference>
<dbReference type="Pfam" id="PF01966">
    <property type="entry name" value="HD"/>
    <property type="match status" value="1"/>
</dbReference>
<dbReference type="Pfam" id="PF01909">
    <property type="entry name" value="NTP_transf_2"/>
    <property type="match status" value="1"/>
</dbReference>
<dbReference type="PIRSF" id="PIRSF006288">
    <property type="entry name" value="PII_uridyltransf"/>
    <property type="match status" value="1"/>
</dbReference>
<dbReference type="SMART" id="SM00471">
    <property type="entry name" value="HDc"/>
    <property type="match status" value="1"/>
</dbReference>
<dbReference type="SUPFAM" id="SSF55021">
    <property type="entry name" value="ACT-like"/>
    <property type="match status" value="2"/>
</dbReference>
<dbReference type="SUPFAM" id="SSF109604">
    <property type="entry name" value="HD-domain/PDEase-like"/>
    <property type="match status" value="1"/>
</dbReference>
<dbReference type="SUPFAM" id="SSF81301">
    <property type="entry name" value="Nucleotidyltransferase"/>
    <property type="match status" value="1"/>
</dbReference>
<dbReference type="SUPFAM" id="SSF81593">
    <property type="entry name" value="Nucleotidyltransferase substrate binding subunit/domain"/>
    <property type="match status" value="1"/>
</dbReference>
<dbReference type="PROSITE" id="PS51671">
    <property type="entry name" value="ACT"/>
    <property type="match status" value="2"/>
</dbReference>
<dbReference type="PROSITE" id="PS51831">
    <property type="entry name" value="HD"/>
    <property type="match status" value="1"/>
</dbReference>
<proteinExistence type="inferred from homology"/>